<name>YFHM_BACSU</name>
<evidence type="ECO:0000250" key="1"/>
<evidence type="ECO:0000255" key="2"/>
<evidence type="ECO:0000305" key="3"/>
<proteinExistence type="inferred from homology"/>
<comment type="similarity">
    <text evidence="3">Belongs to the AB hydrolase superfamily. Epoxide hydrolase family.</text>
</comment>
<dbReference type="EC" id="3.-.-.-"/>
<dbReference type="EMBL" id="D85082">
    <property type="protein sequence ID" value="BAA24479.1"/>
    <property type="molecule type" value="Genomic_DNA"/>
</dbReference>
<dbReference type="EMBL" id="AL009126">
    <property type="protein sequence ID" value="CAB12687.1"/>
    <property type="molecule type" value="Genomic_DNA"/>
</dbReference>
<dbReference type="PIR" id="F69801">
    <property type="entry name" value="F69801"/>
</dbReference>
<dbReference type="SMR" id="O31581"/>
<dbReference type="FunCoup" id="O31581">
    <property type="interactions" value="144"/>
</dbReference>
<dbReference type="STRING" id="224308.BSU08590"/>
<dbReference type="ESTHER" id="bacsu-yfhM">
    <property type="family name" value="Epoxide_hydrolase"/>
</dbReference>
<dbReference type="PaxDb" id="224308-BSU08590"/>
<dbReference type="EnsemblBacteria" id="CAB12687">
    <property type="protein sequence ID" value="CAB12687"/>
    <property type="gene ID" value="BSU_08590"/>
</dbReference>
<dbReference type="GeneID" id="936187"/>
<dbReference type="KEGG" id="bsu:BSU08590"/>
<dbReference type="PATRIC" id="fig|224308.179.peg.927"/>
<dbReference type="eggNOG" id="COG0596">
    <property type="taxonomic scope" value="Bacteria"/>
</dbReference>
<dbReference type="InParanoid" id="O31581"/>
<dbReference type="OrthoDB" id="9773293at2"/>
<dbReference type="PhylomeDB" id="O31581"/>
<dbReference type="BioCyc" id="BSUB:BSU08590-MONOMER"/>
<dbReference type="Proteomes" id="UP000001570">
    <property type="component" value="Chromosome"/>
</dbReference>
<dbReference type="GO" id="GO:0016787">
    <property type="term" value="F:hydrolase activity"/>
    <property type="evidence" value="ECO:0000318"/>
    <property type="project" value="GO_Central"/>
</dbReference>
<dbReference type="Gene3D" id="3.40.50.1820">
    <property type="entry name" value="alpha/beta hydrolase"/>
    <property type="match status" value="1"/>
</dbReference>
<dbReference type="InterPro" id="IPR000073">
    <property type="entry name" value="AB_hydrolase_1"/>
</dbReference>
<dbReference type="InterPro" id="IPR029058">
    <property type="entry name" value="AB_hydrolase_fold"/>
</dbReference>
<dbReference type="InterPro" id="IPR000639">
    <property type="entry name" value="Epox_hydrolase-like"/>
</dbReference>
<dbReference type="PANTHER" id="PTHR43329">
    <property type="entry name" value="EPOXIDE HYDROLASE"/>
    <property type="match status" value="1"/>
</dbReference>
<dbReference type="Pfam" id="PF00561">
    <property type="entry name" value="Abhydrolase_1"/>
    <property type="match status" value="1"/>
</dbReference>
<dbReference type="PRINTS" id="PR00111">
    <property type="entry name" value="ABHYDROLASE"/>
</dbReference>
<dbReference type="PRINTS" id="PR00412">
    <property type="entry name" value="EPOXHYDRLASE"/>
</dbReference>
<dbReference type="SUPFAM" id="SSF53474">
    <property type="entry name" value="alpha/beta-Hydrolases"/>
    <property type="match status" value="1"/>
</dbReference>
<feature type="chain" id="PRO_0000360534" description="AB hydrolase superfamily protein YfhM">
    <location>
        <begin position="1"/>
        <end position="286"/>
    </location>
</feature>
<feature type="domain" description="AB hydrolase-1" evidence="2">
    <location>
        <begin position="27"/>
        <end position="272"/>
    </location>
</feature>
<feature type="active site" description="Nucleophile" evidence="1">
    <location>
        <position position="103"/>
    </location>
</feature>
<feature type="active site" description="Proton donor" evidence="1">
    <location>
        <position position="210"/>
    </location>
</feature>
<feature type="active site" description="Proton acceptor" evidence="1">
    <location>
        <position position="265"/>
    </location>
</feature>
<reference key="1">
    <citation type="journal article" date="1996" name="DNA Res.">
        <title>Cloning and sequencing of a 27.8-kb nucleotide sequence of the 79 degrees-81 degrees region of the Bacillus subtilis genome containing the sspE locus.</title>
        <authorList>
            <person name="Yamamoto H."/>
            <person name="Uchiyama S."/>
            <person name="Sekiguchi J."/>
        </authorList>
    </citation>
    <scope>NUCLEOTIDE SEQUENCE [GENOMIC DNA]</scope>
</reference>
<reference key="2">
    <citation type="journal article" date="1997" name="Nature">
        <title>The complete genome sequence of the Gram-positive bacterium Bacillus subtilis.</title>
        <authorList>
            <person name="Kunst F."/>
            <person name="Ogasawara N."/>
            <person name="Moszer I."/>
            <person name="Albertini A.M."/>
            <person name="Alloni G."/>
            <person name="Azevedo V."/>
            <person name="Bertero M.G."/>
            <person name="Bessieres P."/>
            <person name="Bolotin A."/>
            <person name="Borchert S."/>
            <person name="Borriss R."/>
            <person name="Boursier L."/>
            <person name="Brans A."/>
            <person name="Braun M."/>
            <person name="Brignell S.C."/>
            <person name="Bron S."/>
            <person name="Brouillet S."/>
            <person name="Bruschi C.V."/>
            <person name="Caldwell B."/>
            <person name="Capuano V."/>
            <person name="Carter N.M."/>
            <person name="Choi S.-K."/>
            <person name="Codani J.-J."/>
            <person name="Connerton I.F."/>
            <person name="Cummings N.J."/>
            <person name="Daniel R.A."/>
            <person name="Denizot F."/>
            <person name="Devine K.M."/>
            <person name="Duesterhoeft A."/>
            <person name="Ehrlich S.D."/>
            <person name="Emmerson P.T."/>
            <person name="Entian K.-D."/>
            <person name="Errington J."/>
            <person name="Fabret C."/>
            <person name="Ferrari E."/>
            <person name="Foulger D."/>
            <person name="Fritz C."/>
            <person name="Fujita M."/>
            <person name="Fujita Y."/>
            <person name="Fuma S."/>
            <person name="Galizzi A."/>
            <person name="Galleron N."/>
            <person name="Ghim S.-Y."/>
            <person name="Glaser P."/>
            <person name="Goffeau A."/>
            <person name="Golightly E.J."/>
            <person name="Grandi G."/>
            <person name="Guiseppi G."/>
            <person name="Guy B.J."/>
            <person name="Haga K."/>
            <person name="Haiech J."/>
            <person name="Harwood C.R."/>
            <person name="Henaut A."/>
            <person name="Hilbert H."/>
            <person name="Holsappel S."/>
            <person name="Hosono S."/>
            <person name="Hullo M.-F."/>
            <person name="Itaya M."/>
            <person name="Jones L.-M."/>
            <person name="Joris B."/>
            <person name="Karamata D."/>
            <person name="Kasahara Y."/>
            <person name="Klaerr-Blanchard M."/>
            <person name="Klein C."/>
            <person name="Kobayashi Y."/>
            <person name="Koetter P."/>
            <person name="Koningstein G."/>
            <person name="Krogh S."/>
            <person name="Kumano M."/>
            <person name="Kurita K."/>
            <person name="Lapidus A."/>
            <person name="Lardinois S."/>
            <person name="Lauber J."/>
            <person name="Lazarevic V."/>
            <person name="Lee S.-M."/>
            <person name="Levine A."/>
            <person name="Liu H."/>
            <person name="Masuda S."/>
            <person name="Mauel C."/>
            <person name="Medigue C."/>
            <person name="Medina N."/>
            <person name="Mellado R.P."/>
            <person name="Mizuno M."/>
            <person name="Moestl D."/>
            <person name="Nakai S."/>
            <person name="Noback M."/>
            <person name="Noone D."/>
            <person name="O'Reilly M."/>
            <person name="Ogawa K."/>
            <person name="Ogiwara A."/>
            <person name="Oudega B."/>
            <person name="Park S.-H."/>
            <person name="Parro V."/>
            <person name="Pohl T.M."/>
            <person name="Portetelle D."/>
            <person name="Porwollik S."/>
            <person name="Prescott A.M."/>
            <person name="Presecan E."/>
            <person name="Pujic P."/>
            <person name="Purnelle B."/>
            <person name="Rapoport G."/>
            <person name="Rey M."/>
            <person name="Reynolds S."/>
            <person name="Rieger M."/>
            <person name="Rivolta C."/>
            <person name="Rocha E."/>
            <person name="Roche B."/>
            <person name="Rose M."/>
            <person name="Sadaie Y."/>
            <person name="Sato T."/>
            <person name="Scanlan E."/>
            <person name="Schleich S."/>
            <person name="Schroeter R."/>
            <person name="Scoffone F."/>
            <person name="Sekiguchi J."/>
            <person name="Sekowska A."/>
            <person name="Seror S.J."/>
            <person name="Serror P."/>
            <person name="Shin B.-S."/>
            <person name="Soldo B."/>
            <person name="Sorokin A."/>
            <person name="Tacconi E."/>
            <person name="Takagi T."/>
            <person name="Takahashi H."/>
            <person name="Takemaru K."/>
            <person name="Takeuchi M."/>
            <person name="Tamakoshi A."/>
            <person name="Tanaka T."/>
            <person name="Terpstra P."/>
            <person name="Tognoni A."/>
            <person name="Tosato V."/>
            <person name="Uchiyama S."/>
            <person name="Vandenbol M."/>
            <person name="Vannier F."/>
            <person name="Vassarotti A."/>
            <person name="Viari A."/>
            <person name="Wambutt R."/>
            <person name="Wedler E."/>
            <person name="Wedler H."/>
            <person name="Weitzenegger T."/>
            <person name="Winters P."/>
            <person name="Wipat A."/>
            <person name="Yamamoto H."/>
            <person name="Yamane K."/>
            <person name="Yasumoto K."/>
            <person name="Yata K."/>
            <person name="Yoshida K."/>
            <person name="Yoshikawa H.-F."/>
            <person name="Zumstein E."/>
            <person name="Yoshikawa H."/>
            <person name="Danchin A."/>
        </authorList>
    </citation>
    <scope>NUCLEOTIDE SEQUENCE [LARGE SCALE GENOMIC DNA]</scope>
    <source>
        <strain>168</strain>
    </source>
</reference>
<keyword id="KW-0378">Hydrolase</keyword>
<keyword id="KW-1185">Reference proteome</keyword>
<sequence length="286" mass="32758">MDGVKCQFVNTNGITLHVAAAGREDGPLIVLLHGFPEFWYGWKNQIKPLVDAGYRVIAPDQRGYNLSDKPEGIDSYRIDTLRDDIIGLITQFTDEKAIVIGHDWGGAVAWHLASTRPEYLEKLIAINIPHPHVMKTVTPLYPPQWLKSSYIAYFQLPDIPEASLRENDYDTLDKAIGLSDRPALFTSEDVSRYKEAWKQPGALTAMLNWYRALRKGSLAEKPSYETVPYRMIWGMEDRFLSRKLAKETERHCPNGHLIFVDEASHWINHEKPAIVNQLILEYLKNQ</sequence>
<accession>O31581</accession>
<accession>Q79EV6</accession>
<organism>
    <name type="scientific">Bacillus subtilis (strain 168)</name>
    <dbReference type="NCBI Taxonomy" id="224308"/>
    <lineage>
        <taxon>Bacteria</taxon>
        <taxon>Bacillati</taxon>
        <taxon>Bacillota</taxon>
        <taxon>Bacilli</taxon>
        <taxon>Bacillales</taxon>
        <taxon>Bacillaceae</taxon>
        <taxon>Bacillus</taxon>
    </lineage>
</organism>
<protein>
    <recommendedName>
        <fullName>AB hydrolase superfamily protein YfhM</fullName>
        <ecNumber>3.-.-.-</ecNumber>
    </recommendedName>
</protein>
<gene>
    <name type="primary">yfhM</name>
    <name type="ordered locus">BSU08590</name>
</gene>